<comment type="function">
    <text evidence="1">The alpha subunit is responsible for the aldol cleavage of indoleglycerol phosphate to indole and glyceraldehyde 3-phosphate.</text>
</comment>
<comment type="catalytic activity">
    <reaction evidence="1">
        <text>(1S,2R)-1-C-(indol-3-yl)glycerol 3-phosphate + L-serine = D-glyceraldehyde 3-phosphate + L-tryptophan + H2O</text>
        <dbReference type="Rhea" id="RHEA:10532"/>
        <dbReference type="ChEBI" id="CHEBI:15377"/>
        <dbReference type="ChEBI" id="CHEBI:33384"/>
        <dbReference type="ChEBI" id="CHEBI:57912"/>
        <dbReference type="ChEBI" id="CHEBI:58866"/>
        <dbReference type="ChEBI" id="CHEBI:59776"/>
        <dbReference type="EC" id="4.2.1.20"/>
    </reaction>
</comment>
<comment type="pathway">
    <text evidence="1">Amino-acid biosynthesis; L-tryptophan biosynthesis; L-tryptophan from chorismate: step 5/5.</text>
</comment>
<comment type="subunit">
    <text evidence="1">Tetramer of two alpha and two beta chains.</text>
</comment>
<comment type="similarity">
    <text evidence="1">Belongs to the TrpA family.</text>
</comment>
<feature type="chain" id="PRO_1000076373" description="Tryptophan synthase alpha chain">
    <location>
        <begin position="1"/>
        <end position="259"/>
    </location>
</feature>
<feature type="active site" description="Proton acceptor" evidence="1">
    <location>
        <position position="52"/>
    </location>
</feature>
<feature type="active site" description="Proton acceptor" evidence="1">
    <location>
        <position position="63"/>
    </location>
</feature>
<sequence>MTKTLTQHLETIKREGKGIFLPYIMAGDHEKGLAGLAETIAFLENLGVSAIEIGLPFSDPVADGPVIEEAGLRSLGHHTSAKSLVASLQKLDTQLPLIIMTYFNPIFQYGLKDFVKDLATTPVKGLIIPDLPYEHRNFILPLLEDSDLALIPLVSLTTGLERQQELIKEAEGFIYAVAINGVTGKSGSYRNDLDQHLSKLHDIAEIPVLTGFGVSTLEDVDRFNQVSDGVIVGSKIVKALHEKDDSIAAFIQEAAAYKK</sequence>
<organism>
    <name type="scientific">Streptococcus gordonii (strain Challis / ATCC 35105 / BCRC 15272 / CH1 / DL1 / V288)</name>
    <dbReference type="NCBI Taxonomy" id="467705"/>
    <lineage>
        <taxon>Bacteria</taxon>
        <taxon>Bacillati</taxon>
        <taxon>Bacillota</taxon>
        <taxon>Bacilli</taxon>
        <taxon>Lactobacillales</taxon>
        <taxon>Streptococcaceae</taxon>
        <taxon>Streptococcus</taxon>
    </lineage>
</organism>
<protein>
    <recommendedName>
        <fullName evidence="1">Tryptophan synthase alpha chain</fullName>
        <ecNumber evidence="1">4.2.1.20</ecNumber>
    </recommendedName>
</protein>
<dbReference type="EC" id="4.2.1.20" evidence="1"/>
<dbReference type="EMBL" id="CP000725">
    <property type="protein sequence ID" value="ABV10923.1"/>
    <property type="molecule type" value="Genomic_DNA"/>
</dbReference>
<dbReference type="RefSeq" id="WP_012000140.1">
    <property type="nucleotide sequence ID" value="NC_009785.1"/>
</dbReference>
<dbReference type="SMR" id="A8AW06"/>
<dbReference type="STRING" id="467705.SGO_0663"/>
<dbReference type="KEGG" id="sgo:SGO_0663"/>
<dbReference type="eggNOG" id="COG0159">
    <property type="taxonomic scope" value="Bacteria"/>
</dbReference>
<dbReference type="HOGENOM" id="CLU_016734_0_0_9"/>
<dbReference type="UniPathway" id="UPA00035">
    <property type="reaction ID" value="UER00044"/>
</dbReference>
<dbReference type="Proteomes" id="UP000001131">
    <property type="component" value="Chromosome"/>
</dbReference>
<dbReference type="GO" id="GO:0005829">
    <property type="term" value="C:cytosol"/>
    <property type="evidence" value="ECO:0007669"/>
    <property type="project" value="TreeGrafter"/>
</dbReference>
<dbReference type="GO" id="GO:0004834">
    <property type="term" value="F:tryptophan synthase activity"/>
    <property type="evidence" value="ECO:0007669"/>
    <property type="project" value="UniProtKB-UniRule"/>
</dbReference>
<dbReference type="CDD" id="cd04724">
    <property type="entry name" value="Tryptophan_synthase_alpha"/>
    <property type="match status" value="1"/>
</dbReference>
<dbReference type="Gene3D" id="3.20.20.70">
    <property type="entry name" value="Aldolase class I"/>
    <property type="match status" value="1"/>
</dbReference>
<dbReference type="HAMAP" id="MF_00131">
    <property type="entry name" value="Trp_synth_alpha"/>
    <property type="match status" value="1"/>
</dbReference>
<dbReference type="InterPro" id="IPR013785">
    <property type="entry name" value="Aldolase_TIM"/>
</dbReference>
<dbReference type="InterPro" id="IPR011060">
    <property type="entry name" value="RibuloseP-bd_barrel"/>
</dbReference>
<dbReference type="InterPro" id="IPR018204">
    <property type="entry name" value="Trp_synthase_alpha_AS"/>
</dbReference>
<dbReference type="InterPro" id="IPR002028">
    <property type="entry name" value="Trp_synthase_suA"/>
</dbReference>
<dbReference type="NCBIfam" id="TIGR00262">
    <property type="entry name" value="trpA"/>
    <property type="match status" value="1"/>
</dbReference>
<dbReference type="PANTHER" id="PTHR43406:SF1">
    <property type="entry name" value="TRYPTOPHAN SYNTHASE ALPHA CHAIN, CHLOROPLASTIC"/>
    <property type="match status" value="1"/>
</dbReference>
<dbReference type="PANTHER" id="PTHR43406">
    <property type="entry name" value="TRYPTOPHAN SYNTHASE, ALPHA CHAIN"/>
    <property type="match status" value="1"/>
</dbReference>
<dbReference type="Pfam" id="PF00290">
    <property type="entry name" value="Trp_syntA"/>
    <property type="match status" value="1"/>
</dbReference>
<dbReference type="SUPFAM" id="SSF51366">
    <property type="entry name" value="Ribulose-phoshate binding barrel"/>
    <property type="match status" value="1"/>
</dbReference>
<dbReference type="PROSITE" id="PS00167">
    <property type="entry name" value="TRP_SYNTHASE_ALPHA"/>
    <property type="match status" value="1"/>
</dbReference>
<name>TRPA_STRGC</name>
<proteinExistence type="inferred from homology"/>
<evidence type="ECO:0000255" key="1">
    <source>
        <dbReference type="HAMAP-Rule" id="MF_00131"/>
    </source>
</evidence>
<gene>
    <name evidence="1" type="primary">trpA</name>
    <name type="ordered locus">SGO_0663</name>
</gene>
<accession>A8AW06</accession>
<keyword id="KW-0028">Amino-acid biosynthesis</keyword>
<keyword id="KW-0057">Aromatic amino acid biosynthesis</keyword>
<keyword id="KW-0456">Lyase</keyword>
<keyword id="KW-1185">Reference proteome</keyword>
<keyword id="KW-0822">Tryptophan biosynthesis</keyword>
<reference key="1">
    <citation type="journal article" date="2007" name="J. Bacteriol.">
        <title>Genome-wide transcriptional changes in Streptococcus gordonii in response to competence signaling peptide.</title>
        <authorList>
            <person name="Vickerman M.M."/>
            <person name="Iobst S."/>
            <person name="Jesionowski A.M."/>
            <person name="Gill S.R."/>
        </authorList>
    </citation>
    <scope>NUCLEOTIDE SEQUENCE [LARGE SCALE GENOMIC DNA]</scope>
    <source>
        <strain>Challis / ATCC 35105 / BCRC 15272 / CH1 / DL1 / V288</strain>
    </source>
</reference>